<organism>
    <name type="scientific">Arabidopsis thaliana</name>
    <name type="common">Mouse-ear cress</name>
    <dbReference type="NCBI Taxonomy" id="3702"/>
    <lineage>
        <taxon>Eukaryota</taxon>
        <taxon>Viridiplantae</taxon>
        <taxon>Streptophyta</taxon>
        <taxon>Embryophyta</taxon>
        <taxon>Tracheophyta</taxon>
        <taxon>Spermatophyta</taxon>
        <taxon>Magnoliopsida</taxon>
        <taxon>eudicotyledons</taxon>
        <taxon>Gunneridae</taxon>
        <taxon>Pentapetalae</taxon>
        <taxon>rosids</taxon>
        <taxon>malvids</taxon>
        <taxon>Brassicales</taxon>
        <taxon>Brassicaceae</taxon>
        <taxon>Camelineae</taxon>
        <taxon>Arabidopsis</taxon>
    </lineage>
</organism>
<feature type="chain" id="PRO_0000286988" description="Cyclin-A1-2">
    <location>
        <begin position="1"/>
        <end position="442"/>
    </location>
</feature>
<feature type="region of interest" description="Disordered" evidence="1">
    <location>
        <begin position="1"/>
        <end position="72"/>
    </location>
</feature>
<feature type="compositionally biased region" description="Polar residues" evidence="1">
    <location>
        <begin position="1"/>
        <end position="12"/>
    </location>
</feature>
<feature type="compositionally biased region" description="Polar residues" evidence="1">
    <location>
        <begin position="39"/>
        <end position="63"/>
    </location>
</feature>
<feature type="mutagenesis site" description="In tam; alters male meiosis progression." evidence="2">
    <original>T</original>
    <variation>I</variation>
    <location>
        <position position="283"/>
    </location>
</feature>
<protein>
    <recommendedName>
        <fullName>Cyclin-A1-2</fullName>
    </recommendedName>
    <alternativeName>
        <fullName>G2/mitotic-specific cyclin-A1-2</fullName>
        <shortName>CycA1;2</shortName>
    </alternativeName>
    <alternativeName>
        <fullName>Protein TARDY ASYNCHRONOUS MEIOSIS</fullName>
    </alternativeName>
</protein>
<reference key="1">
    <citation type="journal article" date="2000" name="Nature">
        <title>Sequence and analysis of chromosome 1 of the plant Arabidopsis thaliana.</title>
        <authorList>
            <person name="Theologis A."/>
            <person name="Ecker J.R."/>
            <person name="Palm C.J."/>
            <person name="Federspiel N.A."/>
            <person name="Kaul S."/>
            <person name="White O."/>
            <person name="Alonso J."/>
            <person name="Altafi H."/>
            <person name="Araujo R."/>
            <person name="Bowman C.L."/>
            <person name="Brooks S.Y."/>
            <person name="Buehler E."/>
            <person name="Chan A."/>
            <person name="Chao Q."/>
            <person name="Chen H."/>
            <person name="Cheuk R.F."/>
            <person name="Chin C.W."/>
            <person name="Chung M.K."/>
            <person name="Conn L."/>
            <person name="Conway A.B."/>
            <person name="Conway A.R."/>
            <person name="Creasy T.H."/>
            <person name="Dewar K."/>
            <person name="Dunn P."/>
            <person name="Etgu P."/>
            <person name="Feldblyum T.V."/>
            <person name="Feng J.-D."/>
            <person name="Fong B."/>
            <person name="Fujii C.Y."/>
            <person name="Gill J.E."/>
            <person name="Goldsmith A.D."/>
            <person name="Haas B."/>
            <person name="Hansen N.F."/>
            <person name="Hughes B."/>
            <person name="Huizar L."/>
            <person name="Hunter J.L."/>
            <person name="Jenkins J."/>
            <person name="Johnson-Hopson C."/>
            <person name="Khan S."/>
            <person name="Khaykin E."/>
            <person name="Kim C.J."/>
            <person name="Koo H.L."/>
            <person name="Kremenetskaia I."/>
            <person name="Kurtz D.B."/>
            <person name="Kwan A."/>
            <person name="Lam B."/>
            <person name="Langin-Hooper S."/>
            <person name="Lee A."/>
            <person name="Lee J.M."/>
            <person name="Lenz C.A."/>
            <person name="Li J.H."/>
            <person name="Li Y.-P."/>
            <person name="Lin X."/>
            <person name="Liu S.X."/>
            <person name="Liu Z.A."/>
            <person name="Luros J.S."/>
            <person name="Maiti R."/>
            <person name="Marziali A."/>
            <person name="Militscher J."/>
            <person name="Miranda M."/>
            <person name="Nguyen M."/>
            <person name="Nierman W.C."/>
            <person name="Osborne B.I."/>
            <person name="Pai G."/>
            <person name="Peterson J."/>
            <person name="Pham P.K."/>
            <person name="Rizzo M."/>
            <person name="Rooney T."/>
            <person name="Rowley D."/>
            <person name="Sakano H."/>
            <person name="Salzberg S.L."/>
            <person name="Schwartz J.R."/>
            <person name="Shinn P."/>
            <person name="Southwick A.M."/>
            <person name="Sun H."/>
            <person name="Tallon L.J."/>
            <person name="Tambunga G."/>
            <person name="Toriumi M.J."/>
            <person name="Town C.D."/>
            <person name="Utterback T."/>
            <person name="Van Aken S."/>
            <person name="Vaysberg M."/>
            <person name="Vysotskaia V.S."/>
            <person name="Walker M."/>
            <person name="Wu D."/>
            <person name="Yu G."/>
            <person name="Fraser C.M."/>
            <person name="Venter J.C."/>
            <person name="Davis R.W."/>
        </authorList>
    </citation>
    <scope>NUCLEOTIDE SEQUENCE [LARGE SCALE GENOMIC DNA]</scope>
    <source>
        <strain>cv. Columbia</strain>
    </source>
</reference>
<reference key="2">
    <citation type="journal article" date="2017" name="Plant J.">
        <title>Araport11: a complete reannotation of the Arabidopsis thaliana reference genome.</title>
        <authorList>
            <person name="Cheng C.Y."/>
            <person name="Krishnakumar V."/>
            <person name="Chan A.P."/>
            <person name="Thibaud-Nissen F."/>
            <person name="Schobel S."/>
            <person name="Town C.D."/>
        </authorList>
    </citation>
    <scope>GENOME REANNOTATION</scope>
    <source>
        <strain>cv. Columbia</strain>
    </source>
</reference>
<reference key="3">
    <citation type="journal article" date="2004" name="Plant Physiol.">
        <title>Genome-wide analysis of the cyclin family in Arabidopsis and comparative phylogenetic analysis of plant cyclin-like proteins.</title>
        <authorList>
            <person name="Wang G."/>
            <person name="Kong H."/>
            <person name="Sun Y."/>
            <person name="Zhang X."/>
            <person name="Zhang W."/>
            <person name="Altman N."/>
            <person name="dePamphilis C.W."/>
            <person name="Ma H."/>
        </authorList>
    </citation>
    <scope>GENE FAMILY</scope>
    <scope>NOMENCLATURE</scope>
</reference>
<reference key="4">
    <citation type="journal article" date="2004" name="Plant Physiol.">
        <title>Progression through meiosis I and meiosis II in Arabidopsis anthers is regulated by an A-type cyclin predominately expressed in prophase I.</title>
        <authorList>
            <person name="Wang Y."/>
            <person name="Magnard J.-L."/>
            <person name="McCormick S."/>
            <person name="Yang M."/>
        </authorList>
    </citation>
    <scope>FUNCTION</scope>
    <scope>SUBCELLULAR LOCATION</scope>
    <scope>TISSUE SPECIFICITY</scope>
    <scope>DEVELOPMENTAL STAGE</scope>
    <scope>MUTAGENESIS OF THR-283</scope>
</reference>
<reference key="5">
    <citation type="journal article" date="2005" name="Cell Cycle">
        <title>Arabidopsis anaphase-promoting complexes: multiple activators and wide range of substrates might keep APC perpetually busy.</title>
        <authorList>
            <person name="Fueloep K."/>
            <person name="Tarayre S."/>
            <person name="Kelemen Z."/>
            <person name="Horvath G."/>
            <person name="Kevei Z."/>
            <person name="Nikovics K."/>
            <person name="Bako L."/>
            <person name="Brown S."/>
            <person name="Kondorosi A."/>
            <person name="Kondorosi E."/>
        </authorList>
    </citation>
    <scope>DEVELOPMENTAL STAGE</scope>
    <scope>INTERACTION WITH FZR1 AND FZR2</scope>
</reference>
<reference key="6">
    <citation type="journal article" date="2011" name="PLoS ONE">
        <title>Conserved CDC20 cell cycle functions are carried out by two of the five isoforms in Arabidopsis thaliana.</title>
        <authorList>
            <person name="Kevei Z."/>
            <person name="Baloban M."/>
            <person name="Da Ines O."/>
            <person name="Tiricz H."/>
            <person name="Kroll A."/>
            <person name="Regulski K."/>
            <person name="Mergaert P."/>
            <person name="Kondorosi E."/>
        </authorList>
    </citation>
    <scope>INTERACTION WITH CDC20-1 AND CDC20-2</scope>
</reference>
<keyword id="KW-0131">Cell cycle</keyword>
<keyword id="KW-0132">Cell division</keyword>
<keyword id="KW-0195">Cyclin</keyword>
<keyword id="KW-0963">Cytoplasm</keyword>
<keyword id="KW-0469">Meiosis</keyword>
<keyword id="KW-0539">Nucleus</keyword>
<keyword id="KW-1185">Reference proteome</keyword>
<name>CCA12_ARATH</name>
<sequence>MSSSSRNLSQENPIPRPNLAKTRTSLRDVGNRRAPLGDITNQKNGSRNPSPSSTLVNCSNKIGQSKKAPKPALSRNWNLGILDSGLPPKPNAKSNIIVPYEDTELLQSDDSLLCSSPALSLDASPTQSDPSISTHDSLTNHVVDYMVESTTDDGNDDDDDEIVNIDSDLMDPQLCASFACDIYEHLRVSEVNKRPALDYMERTQSSINASMRSILIDWLVEVAEEYRLSPETLYLAVNYVDRYLTGNAINKQNLQLLGVTCMMIAAKYEEVCVPQVEDFCYITDNTYLRNELLEMESSVLNYLKFELTTPTAKCFLRRFLRAAQGRKEVPSLLSECLACYLTELSLLDYAMLRYAPSLVAASAVFLAQYTLHPSRKPWNATLEHYTSYRAKHMEACVKNLLQLCNEKLSSDVVAIRKKYSQHKYKFAAKKLCPTSLPQELFL</sequence>
<comment type="function">
    <text evidence="2">Involved in the regulation of male meiosis progression.</text>
</comment>
<comment type="subunit">
    <text evidence="3 4">Interacts with CDC20-1, CDC20-2, FZR2/CCS52A1 and FZR1/CCS52A2.</text>
</comment>
<comment type="subcellular location">
    <subcellularLocation>
        <location evidence="2">Cytoplasm</location>
    </subcellularLocation>
    <subcellularLocation>
        <location evidence="2">Nucleus</location>
    </subcellularLocation>
</comment>
<comment type="tissue specificity">
    <text evidence="2">Expressed in roots, stems and flowers.</text>
</comment>
<comment type="developmental stage">
    <text evidence="2 3">Weakly expressed at zygotene, highly at pachitene and disappears from late diplotene to anaphase. Pronounced peak at the G1/S boundary but does not show mitotic expression.</text>
</comment>
<comment type="similarity">
    <text evidence="5">Belongs to the cyclin family. Cyclin AB subfamily.</text>
</comment>
<comment type="sequence caution" evidence="5">
    <conflict type="erroneous gene model prediction">
        <sequence resource="EMBL-CDS" id="AAG29191"/>
    </conflict>
</comment>
<dbReference type="EMBL" id="AC078898">
    <property type="protein sequence ID" value="AAG29191.1"/>
    <property type="status" value="ALT_SEQ"/>
    <property type="molecule type" value="Genomic_DNA"/>
</dbReference>
<dbReference type="EMBL" id="CP002684">
    <property type="protein sequence ID" value="AEE35972.1"/>
    <property type="molecule type" value="Genomic_DNA"/>
</dbReference>
<dbReference type="PIR" id="A96803">
    <property type="entry name" value="A96803"/>
</dbReference>
<dbReference type="SMR" id="Q9FVX0"/>
<dbReference type="BioGRID" id="29294">
    <property type="interactions" value="3"/>
</dbReference>
<dbReference type="FunCoup" id="Q9FVX0">
    <property type="interactions" value="1650"/>
</dbReference>
<dbReference type="STRING" id="3702.Q9FVX0"/>
<dbReference type="PaxDb" id="3702-AT1G77390.1"/>
<dbReference type="EnsemblPlants" id="AT1G77390.1">
    <property type="protein sequence ID" value="AT1G77390.1"/>
    <property type="gene ID" value="AT1G77390"/>
</dbReference>
<dbReference type="GeneID" id="844075"/>
<dbReference type="Gramene" id="AT1G77390.1">
    <property type="protein sequence ID" value="AT1G77390.1"/>
    <property type="gene ID" value="AT1G77390"/>
</dbReference>
<dbReference type="KEGG" id="ath:AT1G77390"/>
<dbReference type="Araport" id="AT1G77390"/>
<dbReference type="TAIR" id="AT1G77390">
    <property type="gene designation" value="CYCA1"/>
</dbReference>
<dbReference type="eggNOG" id="KOG0654">
    <property type="taxonomic scope" value="Eukaryota"/>
</dbReference>
<dbReference type="HOGENOM" id="CLU_020695_13_2_1"/>
<dbReference type="InParanoid" id="Q9FVX0"/>
<dbReference type="OMA" id="AQYILHP"/>
<dbReference type="OrthoDB" id="5590282at2759"/>
<dbReference type="PhylomeDB" id="Q9FVX0"/>
<dbReference type="PRO" id="PR:Q9FVX0"/>
<dbReference type="Proteomes" id="UP000006548">
    <property type="component" value="Chromosome 1"/>
</dbReference>
<dbReference type="ExpressionAtlas" id="Q9FVX0">
    <property type="expression patterns" value="baseline and differential"/>
</dbReference>
<dbReference type="GO" id="GO:0005737">
    <property type="term" value="C:cytoplasm"/>
    <property type="evidence" value="ECO:0000314"/>
    <property type="project" value="TAIR"/>
</dbReference>
<dbReference type="GO" id="GO:0005634">
    <property type="term" value="C:nucleus"/>
    <property type="evidence" value="ECO:0000314"/>
    <property type="project" value="TAIR"/>
</dbReference>
<dbReference type="GO" id="GO:0016538">
    <property type="term" value="F:cyclin-dependent protein serine/threonine kinase regulator activity"/>
    <property type="evidence" value="ECO:0007669"/>
    <property type="project" value="InterPro"/>
</dbReference>
<dbReference type="GO" id="GO:0051301">
    <property type="term" value="P:cell division"/>
    <property type="evidence" value="ECO:0007669"/>
    <property type="project" value="UniProtKB-KW"/>
</dbReference>
<dbReference type="GO" id="GO:0007140">
    <property type="term" value="P:male meiotic nuclear division"/>
    <property type="evidence" value="ECO:0000315"/>
    <property type="project" value="TAIR"/>
</dbReference>
<dbReference type="GO" id="GO:0007135">
    <property type="term" value="P:meiosis II"/>
    <property type="evidence" value="ECO:0000315"/>
    <property type="project" value="TAIR"/>
</dbReference>
<dbReference type="GO" id="GO:0009556">
    <property type="term" value="P:microsporogenesis"/>
    <property type="evidence" value="ECO:0000315"/>
    <property type="project" value="TAIR"/>
</dbReference>
<dbReference type="GO" id="GO:0044772">
    <property type="term" value="P:mitotic cell cycle phase transition"/>
    <property type="evidence" value="ECO:0007669"/>
    <property type="project" value="InterPro"/>
</dbReference>
<dbReference type="GO" id="GO:0051445">
    <property type="term" value="P:regulation of meiotic cell cycle"/>
    <property type="evidence" value="ECO:0000315"/>
    <property type="project" value="TAIR"/>
</dbReference>
<dbReference type="CDD" id="cd20506">
    <property type="entry name" value="CYCLIN_AtCycA-like_rpt2"/>
    <property type="match status" value="1"/>
</dbReference>
<dbReference type="CDD" id="cd20562">
    <property type="entry name" value="CYCLIN_AtCycA_like_rpt1"/>
    <property type="match status" value="1"/>
</dbReference>
<dbReference type="FunFam" id="1.10.472.10:FF:000013">
    <property type="entry name" value="Cyclin A1"/>
    <property type="match status" value="1"/>
</dbReference>
<dbReference type="FunFam" id="1.10.472.10:FF:000167">
    <property type="entry name" value="Mitotic cyclin 6"/>
    <property type="match status" value="1"/>
</dbReference>
<dbReference type="Gene3D" id="1.10.472.10">
    <property type="entry name" value="Cyclin-like"/>
    <property type="match status" value="2"/>
</dbReference>
<dbReference type="InterPro" id="IPR039361">
    <property type="entry name" value="Cyclin"/>
</dbReference>
<dbReference type="InterPro" id="IPR013763">
    <property type="entry name" value="Cyclin-like_dom"/>
</dbReference>
<dbReference type="InterPro" id="IPR036915">
    <property type="entry name" value="Cyclin-like_sf"/>
</dbReference>
<dbReference type="InterPro" id="IPR046965">
    <property type="entry name" value="Cyclin_A/B-like"/>
</dbReference>
<dbReference type="InterPro" id="IPR004367">
    <property type="entry name" value="Cyclin_C-dom"/>
</dbReference>
<dbReference type="InterPro" id="IPR006671">
    <property type="entry name" value="Cyclin_N"/>
</dbReference>
<dbReference type="InterPro" id="IPR048258">
    <property type="entry name" value="Cyclins_cyclin-box"/>
</dbReference>
<dbReference type="PANTHER" id="PTHR10177">
    <property type="entry name" value="CYCLINS"/>
    <property type="match status" value="1"/>
</dbReference>
<dbReference type="Pfam" id="PF02984">
    <property type="entry name" value="Cyclin_C"/>
    <property type="match status" value="1"/>
</dbReference>
<dbReference type="Pfam" id="PF00134">
    <property type="entry name" value="Cyclin_N"/>
    <property type="match status" value="1"/>
</dbReference>
<dbReference type="PIRSF" id="PIRSF001771">
    <property type="entry name" value="Cyclin_A_B_D_E"/>
    <property type="match status" value="1"/>
</dbReference>
<dbReference type="SMART" id="SM00385">
    <property type="entry name" value="CYCLIN"/>
    <property type="match status" value="2"/>
</dbReference>
<dbReference type="SMART" id="SM01332">
    <property type="entry name" value="Cyclin_C"/>
    <property type="match status" value="1"/>
</dbReference>
<dbReference type="SUPFAM" id="SSF47954">
    <property type="entry name" value="Cyclin-like"/>
    <property type="match status" value="2"/>
</dbReference>
<dbReference type="PROSITE" id="PS00292">
    <property type="entry name" value="CYCLINS"/>
    <property type="match status" value="1"/>
</dbReference>
<gene>
    <name type="primary">CYCA1-2</name>
    <name type="synonym">TAM</name>
    <name type="ordered locus">At1g77390</name>
    <name type="ORF">F2P24.10</name>
</gene>
<evidence type="ECO:0000256" key="1">
    <source>
        <dbReference type="SAM" id="MobiDB-lite"/>
    </source>
</evidence>
<evidence type="ECO:0000269" key="2">
    <source>
    </source>
</evidence>
<evidence type="ECO:0000269" key="3">
    <source>
    </source>
</evidence>
<evidence type="ECO:0000269" key="4">
    <source>
    </source>
</evidence>
<evidence type="ECO:0000305" key="5"/>
<proteinExistence type="evidence at protein level"/>
<accession>Q9FVX0</accession>